<keyword id="KW-0002">3D-structure</keyword>
<keyword id="KW-0012">Acyltransferase</keyword>
<keyword id="KW-0093">Biotin biosynthesis</keyword>
<keyword id="KW-0663">Pyridoxal phosphate</keyword>
<keyword id="KW-1185">Reference proteome</keyword>
<keyword id="KW-0808">Transferase</keyword>
<dbReference type="EC" id="2.3.1.47"/>
<dbReference type="EMBL" id="CP000480">
    <property type="protein sequence ID" value="ABK73253.1"/>
    <property type="molecule type" value="Genomic_DNA"/>
</dbReference>
<dbReference type="EMBL" id="CP001663">
    <property type="protein sequence ID" value="AFP39571.1"/>
    <property type="molecule type" value="Genomic_DNA"/>
</dbReference>
<dbReference type="RefSeq" id="WP_011728881.1">
    <property type="nucleotide sequence ID" value="NZ_SIJM01000015.1"/>
</dbReference>
<dbReference type="RefSeq" id="YP_887503.1">
    <property type="nucleotide sequence ID" value="NC_008596.1"/>
</dbReference>
<dbReference type="PDB" id="3WY7">
    <property type="method" value="X-ray"/>
    <property type="resolution" value="2.30 A"/>
    <property type="chains" value="A/B/C/D=1-382"/>
</dbReference>
<dbReference type="PDB" id="7S5M">
    <property type="method" value="X-ray"/>
    <property type="resolution" value="2.25 A"/>
    <property type="chains" value="A/B/C/D=2-382"/>
</dbReference>
<dbReference type="PDBsum" id="3WY7"/>
<dbReference type="PDBsum" id="7S5M"/>
<dbReference type="SMR" id="A0QX65"/>
<dbReference type="STRING" id="246196.MSMEG_3189"/>
<dbReference type="PaxDb" id="246196-MSMEI_3107"/>
<dbReference type="KEGG" id="msb:LJ00_15855"/>
<dbReference type="KEGG" id="msg:MSMEI_3107"/>
<dbReference type="KEGG" id="msm:MSMEG_3189"/>
<dbReference type="PATRIC" id="fig|246196.19.peg.3151"/>
<dbReference type="eggNOG" id="COG0156">
    <property type="taxonomic scope" value="Bacteria"/>
</dbReference>
<dbReference type="OrthoDB" id="9807157at2"/>
<dbReference type="BRENDA" id="2.3.1.47">
    <property type="organism ID" value="3512"/>
</dbReference>
<dbReference type="UniPathway" id="UPA00078"/>
<dbReference type="EvolutionaryTrace" id="A0QX65"/>
<dbReference type="Proteomes" id="UP000000757">
    <property type="component" value="Chromosome"/>
</dbReference>
<dbReference type="Proteomes" id="UP000006158">
    <property type="component" value="Chromosome"/>
</dbReference>
<dbReference type="GO" id="GO:0008710">
    <property type="term" value="F:8-amino-7-oxononanoate synthase activity"/>
    <property type="evidence" value="ECO:0007669"/>
    <property type="project" value="UniProtKB-EC"/>
</dbReference>
<dbReference type="GO" id="GO:0030170">
    <property type="term" value="F:pyridoxal phosphate binding"/>
    <property type="evidence" value="ECO:0007669"/>
    <property type="project" value="InterPro"/>
</dbReference>
<dbReference type="GO" id="GO:0009102">
    <property type="term" value="P:biotin biosynthetic process"/>
    <property type="evidence" value="ECO:0007669"/>
    <property type="project" value="UniProtKB-UniPathway"/>
</dbReference>
<dbReference type="Gene3D" id="3.90.1150.10">
    <property type="entry name" value="Aspartate Aminotransferase, domain 1"/>
    <property type="match status" value="1"/>
</dbReference>
<dbReference type="Gene3D" id="3.40.640.10">
    <property type="entry name" value="Type I PLP-dependent aspartate aminotransferase-like (Major domain)"/>
    <property type="match status" value="1"/>
</dbReference>
<dbReference type="InterPro" id="IPR001917">
    <property type="entry name" value="Aminotrans_II_pyridoxalP_BS"/>
</dbReference>
<dbReference type="InterPro" id="IPR004839">
    <property type="entry name" value="Aminotransferase_I/II_large"/>
</dbReference>
<dbReference type="InterPro" id="IPR050087">
    <property type="entry name" value="AON_synthase_class-II"/>
</dbReference>
<dbReference type="InterPro" id="IPR015424">
    <property type="entry name" value="PyrdxlP-dep_Trfase"/>
</dbReference>
<dbReference type="InterPro" id="IPR015421">
    <property type="entry name" value="PyrdxlP-dep_Trfase_major"/>
</dbReference>
<dbReference type="InterPro" id="IPR015422">
    <property type="entry name" value="PyrdxlP-dep_Trfase_small"/>
</dbReference>
<dbReference type="PANTHER" id="PTHR13693:SF100">
    <property type="entry name" value="8-AMINO-7-OXONONANOATE SYNTHASE"/>
    <property type="match status" value="1"/>
</dbReference>
<dbReference type="PANTHER" id="PTHR13693">
    <property type="entry name" value="CLASS II AMINOTRANSFERASE/8-AMINO-7-OXONONANOATE SYNTHASE"/>
    <property type="match status" value="1"/>
</dbReference>
<dbReference type="Pfam" id="PF00155">
    <property type="entry name" value="Aminotran_1_2"/>
    <property type="match status" value="1"/>
</dbReference>
<dbReference type="SUPFAM" id="SSF53383">
    <property type="entry name" value="PLP-dependent transferases"/>
    <property type="match status" value="1"/>
</dbReference>
<dbReference type="PROSITE" id="PS00599">
    <property type="entry name" value="AA_TRANSFER_CLASS_2"/>
    <property type="match status" value="1"/>
</dbReference>
<evidence type="ECO:0000250" key="1"/>
<evidence type="ECO:0000305" key="2"/>
<evidence type="ECO:0007829" key="3">
    <source>
        <dbReference type="PDB" id="3WY7"/>
    </source>
</evidence>
<evidence type="ECO:0007829" key="4">
    <source>
        <dbReference type="PDB" id="7S5M"/>
    </source>
</evidence>
<comment type="function">
    <text evidence="1">Catalyzes the decarboxylative condensation of pimeloyl-[acyl-carrier protein] and L-alanine to produce 8-amino-7-oxononanoate (AON), [acyl-carrier protein], and carbon dioxide.</text>
</comment>
<comment type="catalytic activity">
    <reaction>
        <text>6-carboxyhexanoyl-[ACP] + L-alanine + H(+) = (8S)-8-amino-7-oxononanoate + holo-[ACP] + CO2</text>
        <dbReference type="Rhea" id="RHEA:42288"/>
        <dbReference type="Rhea" id="RHEA-COMP:9685"/>
        <dbReference type="Rhea" id="RHEA-COMP:9955"/>
        <dbReference type="ChEBI" id="CHEBI:15378"/>
        <dbReference type="ChEBI" id="CHEBI:16526"/>
        <dbReference type="ChEBI" id="CHEBI:57972"/>
        <dbReference type="ChEBI" id="CHEBI:64479"/>
        <dbReference type="ChEBI" id="CHEBI:78846"/>
        <dbReference type="ChEBI" id="CHEBI:149468"/>
        <dbReference type="EC" id="2.3.1.47"/>
    </reaction>
</comment>
<comment type="cofactor">
    <cofactor evidence="1">
        <name>pyridoxal 5'-phosphate</name>
        <dbReference type="ChEBI" id="CHEBI:597326"/>
    </cofactor>
</comment>
<comment type="pathway">
    <text>Cofactor biosynthesis; biotin biosynthesis.</text>
</comment>
<comment type="subunit">
    <text evidence="1">Homodimer.</text>
</comment>
<comment type="similarity">
    <text evidence="2">Belongs to the class-II pyridoxal-phosphate-dependent aminotransferase family. BioF subfamily.</text>
</comment>
<proteinExistence type="evidence at protein level"/>
<protein>
    <recommendedName>
        <fullName>8-amino-7-oxononanoate synthase</fullName>
        <shortName>AONS</shortName>
        <ecNumber>2.3.1.47</ecNumber>
    </recommendedName>
    <alternativeName>
        <fullName>7-keto-8-amino-pelargonic acid synthase</fullName>
        <shortName>7-KAP synthase</shortName>
        <shortName>KAPA synthase</shortName>
    </alternativeName>
    <alternativeName>
        <fullName>8-amino-7-ketopelargonate synthase</fullName>
    </alternativeName>
    <alternativeName>
        <fullName>Alpha-oxoamine synthase</fullName>
    </alternativeName>
</protein>
<name>BIOF_MYCS2</name>
<sequence length="382" mass="39343">MTRAGLSPLAWLADIEQRRRAEGLRRELRVRPPVAAELDLASNDYLGLSQHPDVLDGGVEALRTWGGGAGGSRLVTGNTELHEAFEHQLASFLGAESALVFSSGYTANLGALVALSGPGSLIVSDALSHASLVDACRLSRARVVVSPHRDVDAVDAALAARTEERAVVVTESVFSADGDLAPLRDLHAVCRRHGALLLVDEAHGLGVRGTRGQGLLHEVGLAGAPDIVMTTTLSKALGSQGGAVLGPEAVRAHLIDTARSFIFDTGLAPAAVGAASAALRVLDAEPQRARAVLDRAAELATIAGVTEAPVSAVVSVILGDPEIAVGAAAACLDRGVRVGCFRPPTVPAGTSRLRLAARASLTDDEMALARQVLTDVLATARA</sequence>
<organism>
    <name type="scientific">Mycolicibacterium smegmatis (strain ATCC 700084 / mc(2)155)</name>
    <name type="common">Mycobacterium smegmatis</name>
    <dbReference type="NCBI Taxonomy" id="246196"/>
    <lineage>
        <taxon>Bacteria</taxon>
        <taxon>Bacillati</taxon>
        <taxon>Actinomycetota</taxon>
        <taxon>Actinomycetes</taxon>
        <taxon>Mycobacteriales</taxon>
        <taxon>Mycobacteriaceae</taxon>
        <taxon>Mycolicibacterium</taxon>
    </lineage>
</organism>
<gene>
    <name type="primary">bioF</name>
    <name type="ordered locus">MSMEG_3189</name>
    <name type="ordered locus">MSMEI_3107</name>
</gene>
<reference key="1">
    <citation type="submission" date="2006-10" db="EMBL/GenBank/DDBJ databases">
        <authorList>
            <person name="Fleischmann R.D."/>
            <person name="Dodson R.J."/>
            <person name="Haft D.H."/>
            <person name="Merkel J.S."/>
            <person name="Nelson W.C."/>
            <person name="Fraser C.M."/>
        </authorList>
    </citation>
    <scope>NUCLEOTIDE SEQUENCE [LARGE SCALE GENOMIC DNA]</scope>
    <source>
        <strain>ATCC 700084 / mc(2)155</strain>
    </source>
</reference>
<reference key="2">
    <citation type="journal article" date="2007" name="Genome Biol.">
        <title>Interrupted coding sequences in Mycobacterium smegmatis: authentic mutations or sequencing errors?</title>
        <authorList>
            <person name="Deshayes C."/>
            <person name="Perrodou E."/>
            <person name="Gallien S."/>
            <person name="Euphrasie D."/>
            <person name="Schaeffer C."/>
            <person name="Van-Dorsselaer A."/>
            <person name="Poch O."/>
            <person name="Lecompte O."/>
            <person name="Reyrat J.-M."/>
        </authorList>
    </citation>
    <scope>NUCLEOTIDE SEQUENCE [LARGE SCALE GENOMIC DNA]</scope>
    <source>
        <strain>ATCC 700084 / mc(2)155</strain>
    </source>
</reference>
<reference key="3">
    <citation type="journal article" date="2009" name="Genome Res.">
        <title>Ortho-proteogenomics: multiple proteomes investigation through orthology and a new MS-based protocol.</title>
        <authorList>
            <person name="Gallien S."/>
            <person name="Perrodou E."/>
            <person name="Carapito C."/>
            <person name="Deshayes C."/>
            <person name="Reyrat J.-M."/>
            <person name="Van Dorsselaer A."/>
            <person name="Poch O."/>
            <person name="Schaeffer C."/>
            <person name="Lecompte O."/>
        </authorList>
    </citation>
    <scope>NUCLEOTIDE SEQUENCE [LARGE SCALE GENOMIC DNA]</scope>
    <source>
        <strain>ATCC 700084 / mc(2)155</strain>
    </source>
</reference>
<accession>A0QX65</accession>
<accession>I7G8Q0</accession>
<feature type="chain" id="PRO_0000381039" description="8-amino-7-oxononanoate synthase">
    <location>
        <begin position="1"/>
        <end position="382"/>
    </location>
</feature>
<feature type="binding site" evidence="1">
    <location>
        <position position="26"/>
    </location>
    <ligand>
        <name>substrate</name>
    </ligand>
</feature>
<feature type="binding site" evidence="1">
    <location>
        <begin position="104"/>
        <end position="105"/>
    </location>
    <ligand>
        <name>pyridoxal 5'-phosphate</name>
        <dbReference type="ChEBI" id="CHEBI:597326"/>
    </ligand>
</feature>
<feature type="binding site" evidence="1">
    <location>
        <position position="129"/>
    </location>
    <ligand>
        <name>substrate</name>
    </ligand>
</feature>
<feature type="binding site" evidence="1">
    <location>
        <position position="175"/>
    </location>
    <ligand>
        <name>pyridoxal 5'-phosphate</name>
        <dbReference type="ChEBI" id="CHEBI:597326"/>
    </ligand>
</feature>
<feature type="binding site" evidence="1">
    <location>
        <begin position="200"/>
        <end position="203"/>
    </location>
    <ligand>
        <name>pyridoxal 5'-phosphate</name>
        <dbReference type="ChEBI" id="CHEBI:597326"/>
    </ligand>
</feature>
<feature type="binding site" evidence="1">
    <location>
        <begin position="232"/>
        <end position="235"/>
    </location>
    <ligand>
        <name>pyridoxal 5'-phosphate</name>
        <dbReference type="ChEBI" id="CHEBI:597326"/>
    </ligand>
</feature>
<feature type="binding site" evidence="1">
    <location>
        <position position="345"/>
    </location>
    <ligand>
        <name>substrate</name>
    </ligand>
</feature>
<feature type="modified residue" description="N6-(pyridoxal phosphate)lysine" evidence="1">
    <location>
        <position position="235"/>
    </location>
</feature>
<feature type="helix" evidence="4">
    <location>
        <begin position="7"/>
        <end position="21"/>
    </location>
</feature>
<feature type="strand" evidence="4">
    <location>
        <begin position="36"/>
        <end position="39"/>
    </location>
</feature>
<feature type="helix" evidence="4">
    <location>
        <begin position="52"/>
        <end position="65"/>
    </location>
</feature>
<feature type="turn" evidence="4">
    <location>
        <begin position="73"/>
        <end position="76"/>
    </location>
</feature>
<feature type="helix" evidence="4">
    <location>
        <begin position="80"/>
        <end position="93"/>
    </location>
</feature>
<feature type="strand" evidence="4">
    <location>
        <begin position="96"/>
        <end position="103"/>
    </location>
</feature>
<feature type="helix" evidence="4">
    <location>
        <begin position="104"/>
        <end position="115"/>
    </location>
</feature>
<feature type="strand" evidence="4">
    <location>
        <begin position="120"/>
        <end position="125"/>
    </location>
</feature>
<feature type="turn" evidence="3">
    <location>
        <begin position="126"/>
        <end position="128"/>
    </location>
</feature>
<feature type="helix" evidence="4">
    <location>
        <begin position="130"/>
        <end position="139"/>
    </location>
</feature>
<feature type="strand" evidence="4">
    <location>
        <begin position="141"/>
        <end position="146"/>
    </location>
</feature>
<feature type="helix" evidence="4">
    <location>
        <begin position="151"/>
        <end position="160"/>
    </location>
</feature>
<feature type="strand" evidence="4">
    <location>
        <begin position="164"/>
        <end position="173"/>
    </location>
</feature>
<feature type="turn" evidence="4">
    <location>
        <begin position="175"/>
        <end position="177"/>
    </location>
</feature>
<feature type="helix" evidence="4">
    <location>
        <begin position="183"/>
        <end position="193"/>
    </location>
</feature>
<feature type="strand" evidence="4">
    <location>
        <begin position="196"/>
        <end position="200"/>
    </location>
</feature>
<feature type="turn" evidence="4">
    <location>
        <begin position="202"/>
        <end position="207"/>
    </location>
</feature>
<feature type="helix" evidence="4">
    <location>
        <begin position="215"/>
        <end position="218"/>
    </location>
</feature>
<feature type="strand" evidence="4">
    <location>
        <begin position="227"/>
        <end position="235"/>
    </location>
</feature>
<feature type="strand" evidence="4">
    <location>
        <begin position="242"/>
        <end position="246"/>
    </location>
</feature>
<feature type="helix" evidence="4">
    <location>
        <begin position="248"/>
        <end position="257"/>
    </location>
</feature>
<feature type="helix" evidence="4">
    <location>
        <begin position="259"/>
        <end position="262"/>
    </location>
</feature>
<feature type="helix" evidence="4">
    <location>
        <begin position="269"/>
        <end position="284"/>
    </location>
</feature>
<feature type="helix" evidence="4">
    <location>
        <begin position="287"/>
        <end position="303"/>
    </location>
</feature>
<feature type="strand" evidence="4">
    <location>
        <begin position="310"/>
        <end position="317"/>
    </location>
</feature>
<feature type="helix" evidence="4">
    <location>
        <begin position="321"/>
        <end position="333"/>
    </location>
</feature>
<feature type="strand" evidence="4">
    <location>
        <begin position="339"/>
        <end position="341"/>
    </location>
</feature>
<feature type="turn" evidence="3">
    <location>
        <begin position="343"/>
        <end position="345"/>
    </location>
</feature>
<feature type="strand" evidence="4">
    <location>
        <begin position="352"/>
        <end position="356"/>
    </location>
</feature>
<feature type="helix" evidence="4">
    <location>
        <begin position="363"/>
        <end position="380"/>
    </location>
</feature>